<gene>
    <name evidence="1" type="primary">rpsF</name>
    <name type="ordered locus">Mfl080</name>
</gene>
<reference key="1">
    <citation type="submission" date="2004-06" db="EMBL/GenBank/DDBJ databases">
        <authorList>
            <person name="Birren B.W."/>
            <person name="Stange-Thomann N."/>
            <person name="Hafez N."/>
            <person name="DeCaprio D."/>
            <person name="Fisher S."/>
            <person name="Butler J."/>
            <person name="Elkins T."/>
            <person name="Kodira C.D."/>
            <person name="Major J."/>
            <person name="Wang S."/>
            <person name="Nicol R."/>
            <person name="Nusbaum C."/>
        </authorList>
    </citation>
    <scope>NUCLEOTIDE SEQUENCE [LARGE SCALE GENOMIC DNA]</scope>
    <source>
        <strain>ATCC 33453 / NBRC 100688 / NCTC 11704 / L1</strain>
    </source>
</reference>
<proteinExistence type="inferred from homology"/>
<organism>
    <name type="scientific">Mesoplasma florum (strain ATCC 33453 / NBRC 100688 / NCTC 11704 / L1)</name>
    <name type="common">Acholeplasma florum</name>
    <dbReference type="NCBI Taxonomy" id="265311"/>
    <lineage>
        <taxon>Bacteria</taxon>
        <taxon>Bacillati</taxon>
        <taxon>Mycoplasmatota</taxon>
        <taxon>Mollicutes</taxon>
        <taxon>Entomoplasmatales</taxon>
        <taxon>Entomoplasmataceae</taxon>
        <taxon>Mesoplasma</taxon>
    </lineage>
</organism>
<keyword id="KW-1185">Reference proteome</keyword>
<keyword id="KW-0687">Ribonucleoprotein</keyword>
<keyword id="KW-0689">Ribosomal protein</keyword>
<keyword id="KW-0694">RNA-binding</keyword>
<keyword id="KW-0699">rRNA-binding</keyword>
<accession>Q6F237</accession>
<protein>
    <recommendedName>
        <fullName evidence="1">Small ribosomal subunit protein bS6</fullName>
    </recommendedName>
    <alternativeName>
        <fullName evidence="3">30S ribosomal protein S6</fullName>
    </alternativeName>
</protein>
<feature type="chain" id="PRO_0000229548" description="Small ribosomal subunit protein bS6">
    <location>
        <begin position="1"/>
        <end position="290"/>
    </location>
</feature>
<feature type="region of interest" description="Disordered" evidence="2">
    <location>
        <begin position="208"/>
        <end position="233"/>
    </location>
</feature>
<evidence type="ECO:0000255" key="1">
    <source>
        <dbReference type="HAMAP-Rule" id="MF_00360"/>
    </source>
</evidence>
<evidence type="ECO:0000256" key="2">
    <source>
        <dbReference type="SAM" id="MobiDB-lite"/>
    </source>
</evidence>
<evidence type="ECO:0000305" key="3"/>
<sequence>MLRKYEAMFILDQDTQDVNALSSRMIEIISKDGKVIEKNDLGLIEFAYKINHKKKGHYFVVIVEATAEAIKEFERIANIEKNVVRTLIINTENEQGYEQSVQLSKTDMTKFEEERKAKRDFKKPFVKKEFNKPTEKRTFEKPAEVTVEVKEVVVEEVKQTVKPAKKVAEAKVEEVSHEEAHDFVSKMEAKYKAHLAETVEEHVEEVEVEEAKTTAKKPAAPKMSAAERAKVDGSHNIDEERYELQKYSNKLRSVAIEKNLPKKLQEVNLRDLTKKELIEYMRKVRAALAK</sequence>
<dbReference type="EMBL" id="AE017263">
    <property type="protein sequence ID" value="AAT75436.1"/>
    <property type="molecule type" value="Genomic_DNA"/>
</dbReference>
<dbReference type="RefSeq" id="WP_011182977.1">
    <property type="nucleotide sequence ID" value="NC_006055.1"/>
</dbReference>
<dbReference type="RefSeq" id="YP_053320.1">
    <property type="nucleotide sequence ID" value="NC_006055.1"/>
</dbReference>
<dbReference type="SMR" id="Q6F237"/>
<dbReference type="STRING" id="265311.Mfl080"/>
<dbReference type="PaxDb" id="265311-Mfl080"/>
<dbReference type="EnsemblBacteria" id="AAT75436">
    <property type="protein sequence ID" value="AAT75436"/>
    <property type="gene ID" value="Mfl080"/>
</dbReference>
<dbReference type="GeneID" id="2898172"/>
<dbReference type="KEGG" id="mfl:Mfl080"/>
<dbReference type="PATRIC" id="fig|265311.5.peg.81"/>
<dbReference type="eggNOG" id="COG0360">
    <property type="taxonomic scope" value="Bacteria"/>
</dbReference>
<dbReference type="HOGENOM" id="CLU_959106_0_0_14"/>
<dbReference type="OrthoDB" id="9812702at2"/>
<dbReference type="Proteomes" id="UP000006647">
    <property type="component" value="Chromosome"/>
</dbReference>
<dbReference type="GO" id="GO:0005737">
    <property type="term" value="C:cytoplasm"/>
    <property type="evidence" value="ECO:0007669"/>
    <property type="project" value="UniProtKB-ARBA"/>
</dbReference>
<dbReference type="GO" id="GO:1990904">
    <property type="term" value="C:ribonucleoprotein complex"/>
    <property type="evidence" value="ECO:0007669"/>
    <property type="project" value="UniProtKB-KW"/>
</dbReference>
<dbReference type="GO" id="GO:0005840">
    <property type="term" value="C:ribosome"/>
    <property type="evidence" value="ECO:0007669"/>
    <property type="project" value="UniProtKB-KW"/>
</dbReference>
<dbReference type="GO" id="GO:0070181">
    <property type="term" value="F:small ribosomal subunit rRNA binding"/>
    <property type="evidence" value="ECO:0007669"/>
    <property type="project" value="TreeGrafter"/>
</dbReference>
<dbReference type="GO" id="GO:0003735">
    <property type="term" value="F:structural constituent of ribosome"/>
    <property type="evidence" value="ECO:0007669"/>
    <property type="project" value="InterPro"/>
</dbReference>
<dbReference type="GO" id="GO:0006412">
    <property type="term" value="P:translation"/>
    <property type="evidence" value="ECO:0007669"/>
    <property type="project" value="UniProtKB-UniRule"/>
</dbReference>
<dbReference type="CDD" id="cd00473">
    <property type="entry name" value="bS6"/>
    <property type="match status" value="1"/>
</dbReference>
<dbReference type="Gene3D" id="3.30.70.60">
    <property type="match status" value="1"/>
</dbReference>
<dbReference type="HAMAP" id="MF_00360">
    <property type="entry name" value="Ribosomal_bS6"/>
    <property type="match status" value="1"/>
</dbReference>
<dbReference type="InterPro" id="IPR000529">
    <property type="entry name" value="Ribosomal_bS6"/>
</dbReference>
<dbReference type="InterPro" id="IPR035980">
    <property type="entry name" value="Ribosomal_bS6_sf"/>
</dbReference>
<dbReference type="InterPro" id="IPR020814">
    <property type="entry name" value="Ribosomal_S6_plastid/chlpt"/>
</dbReference>
<dbReference type="InterPro" id="IPR014717">
    <property type="entry name" value="Transl_elong_EF1B/ribsomal_bS6"/>
</dbReference>
<dbReference type="NCBIfam" id="TIGR00166">
    <property type="entry name" value="S6"/>
    <property type="match status" value="1"/>
</dbReference>
<dbReference type="PANTHER" id="PTHR21011">
    <property type="entry name" value="MITOCHONDRIAL 28S RIBOSOMAL PROTEIN S6"/>
    <property type="match status" value="1"/>
</dbReference>
<dbReference type="PANTHER" id="PTHR21011:SF1">
    <property type="entry name" value="SMALL RIBOSOMAL SUBUNIT PROTEIN BS6M"/>
    <property type="match status" value="1"/>
</dbReference>
<dbReference type="Pfam" id="PF01250">
    <property type="entry name" value="Ribosomal_S6"/>
    <property type="match status" value="1"/>
</dbReference>
<dbReference type="SUPFAM" id="SSF54995">
    <property type="entry name" value="Ribosomal protein S6"/>
    <property type="match status" value="1"/>
</dbReference>
<name>RS6_MESFL</name>
<comment type="function">
    <text evidence="1">Binds together with bS18 to 16S ribosomal RNA.</text>
</comment>
<comment type="similarity">
    <text evidence="1">Belongs to the bacterial ribosomal protein bS6 family.</text>
</comment>